<name>CYOE_CROS8</name>
<comment type="function">
    <text evidence="1">Converts heme B (protoheme IX) to heme O by substitution of the vinyl group on carbon 2 of heme B porphyrin ring with a hydroxyethyl farnesyl side group.</text>
</comment>
<comment type="catalytic activity">
    <reaction evidence="1">
        <text>heme b + (2E,6E)-farnesyl diphosphate + H2O = Fe(II)-heme o + diphosphate</text>
        <dbReference type="Rhea" id="RHEA:28070"/>
        <dbReference type="ChEBI" id="CHEBI:15377"/>
        <dbReference type="ChEBI" id="CHEBI:33019"/>
        <dbReference type="ChEBI" id="CHEBI:60344"/>
        <dbReference type="ChEBI" id="CHEBI:60530"/>
        <dbReference type="ChEBI" id="CHEBI:175763"/>
        <dbReference type="EC" id="2.5.1.141"/>
    </reaction>
</comment>
<comment type="pathway">
    <text evidence="1">Porphyrin-containing compound metabolism; heme O biosynthesis; heme O from protoheme: step 1/1.</text>
</comment>
<comment type="subcellular location">
    <subcellularLocation>
        <location evidence="1">Cell inner membrane</location>
        <topology evidence="1">Multi-pass membrane protein</topology>
    </subcellularLocation>
</comment>
<comment type="miscellaneous">
    <text evidence="1">Carbon 2 of the heme B porphyrin ring is defined according to the Fischer nomenclature.</text>
</comment>
<comment type="similarity">
    <text evidence="1">Belongs to the UbiA prenyltransferase family. Protoheme IX farnesyltransferase subfamily.</text>
</comment>
<reference key="1">
    <citation type="journal article" date="2010" name="PLoS ONE">
        <title>Genome sequence of Cronobacter sakazakii BAA-894 and comparative genomic hybridization analysis with other Cronobacter species.</title>
        <authorList>
            <person name="Kucerova E."/>
            <person name="Clifton S.W."/>
            <person name="Xia X.Q."/>
            <person name="Long F."/>
            <person name="Porwollik S."/>
            <person name="Fulton L."/>
            <person name="Fronick C."/>
            <person name="Minx P."/>
            <person name="Kyung K."/>
            <person name="Warren W."/>
            <person name="Fulton R."/>
            <person name="Feng D."/>
            <person name="Wollam A."/>
            <person name="Shah N."/>
            <person name="Bhonagiri V."/>
            <person name="Nash W.E."/>
            <person name="Hallsworth-Pepin K."/>
            <person name="Wilson R.K."/>
            <person name="McClelland M."/>
            <person name="Forsythe S.J."/>
        </authorList>
    </citation>
    <scope>NUCLEOTIDE SEQUENCE [LARGE SCALE GENOMIC DNA]</scope>
    <source>
        <strain>ATCC BAA-894</strain>
    </source>
</reference>
<sequence length="295" mass="32478">MIKQYLQVTKPGIIFGNLISVIGGFLLASKGSIDYPLFLFTLVGVSLVVASGCVFNNYIDRDIDRKMERTKNRVLVKGLISPKMSLVYATLLGIAGFMLLWFGANPLAMWLAVMGFVVYVGVYSLYMKRHSVYGTLIGSLSGAAPPVIGYCAVTNEFDTGALILLAIFSLWQMPHSYAIAIFRFKDYQAANIPVLPVVKGISVAKNHITLYIIAFAVATLMLSLGGYAGYKYLVVAAAVSVWWLGMALRGYKAENDKVWARKLFVFSIVAITSLSVMMSVDFMVPDSHNLLTYVW</sequence>
<accession>A7MFG8</accession>
<keyword id="KW-0997">Cell inner membrane</keyword>
<keyword id="KW-1003">Cell membrane</keyword>
<keyword id="KW-0350">Heme biosynthesis</keyword>
<keyword id="KW-0472">Membrane</keyword>
<keyword id="KW-1185">Reference proteome</keyword>
<keyword id="KW-0808">Transferase</keyword>
<keyword id="KW-0812">Transmembrane</keyword>
<keyword id="KW-1133">Transmembrane helix</keyword>
<dbReference type="EC" id="2.5.1.141" evidence="1"/>
<dbReference type="EMBL" id="CP000783">
    <property type="protein sequence ID" value="ABU78103.1"/>
    <property type="molecule type" value="Genomic_DNA"/>
</dbReference>
<dbReference type="RefSeq" id="WP_007705361.1">
    <property type="nucleotide sequence ID" value="NC_009778.1"/>
</dbReference>
<dbReference type="SMR" id="A7MFG8"/>
<dbReference type="GeneID" id="92807394"/>
<dbReference type="KEGG" id="esa:ESA_02874"/>
<dbReference type="HOGENOM" id="CLU_029631_0_0_6"/>
<dbReference type="UniPathway" id="UPA00834">
    <property type="reaction ID" value="UER00712"/>
</dbReference>
<dbReference type="Proteomes" id="UP000000260">
    <property type="component" value="Chromosome"/>
</dbReference>
<dbReference type="GO" id="GO:0005886">
    <property type="term" value="C:plasma membrane"/>
    <property type="evidence" value="ECO:0007669"/>
    <property type="project" value="UniProtKB-SubCell"/>
</dbReference>
<dbReference type="GO" id="GO:0008495">
    <property type="term" value="F:protoheme IX farnesyltransferase activity"/>
    <property type="evidence" value="ECO:0007669"/>
    <property type="project" value="UniProtKB-UniRule"/>
</dbReference>
<dbReference type="GO" id="GO:0048034">
    <property type="term" value="P:heme O biosynthetic process"/>
    <property type="evidence" value="ECO:0007669"/>
    <property type="project" value="UniProtKB-UniRule"/>
</dbReference>
<dbReference type="CDD" id="cd13957">
    <property type="entry name" value="PT_UbiA_Cox10"/>
    <property type="match status" value="1"/>
</dbReference>
<dbReference type="FunFam" id="1.10.357.140:FF:000001">
    <property type="entry name" value="Protoheme IX farnesyltransferase"/>
    <property type="match status" value="1"/>
</dbReference>
<dbReference type="Gene3D" id="1.10.357.140">
    <property type="entry name" value="UbiA prenyltransferase"/>
    <property type="match status" value="1"/>
</dbReference>
<dbReference type="HAMAP" id="MF_00154">
    <property type="entry name" value="CyoE_CtaB"/>
    <property type="match status" value="1"/>
</dbReference>
<dbReference type="InterPro" id="IPR006369">
    <property type="entry name" value="Protohaem_IX_farnesylTrfase"/>
</dbReference>
<dbReference type="InterPro" id="IPR000537">
    <property type="entry name" value="UbiA_prenyltransferase"/>
</dbReference>
<dbReference type="InterPro" id="IPR030470">
    <property type="entry name" value="UbiA_prenylTrfase_CS"/>
</dbReference>
<dbReference type="InterPro" id="IPR044878">
    <property type="entry name" value="UbiA_sf"/>
</dbReference>
<dbReference type="NCBIfam" id="TIGR01473">
    <property type="entry name" value="cyoE_ctaB"/>
    <property type="match status" value="1"/>
</dbReference>
<dbReference type="NCBIfam" id="NF003348">
    <property type="entry name" value="PRK04375.1-1"/>
    <property type="match status" value="1"/>
</dbReference>
<dbReference type="PANTHER" id="PTHR43448">
    <property type="entry name" value="PROTOHEME IX FARNESYLTRANSFERASE, MITOCHONDRIAL"/>
    <property type="match status" value="1"/>
</dbReference>
<dbReference type="PANTHER" id="PTHR43448:SF2">
    <property type="entry name" value="PROTOHEME IX FARNESYLTRANSFERASE, MITOCHONDRIAL"/>
    <property type="match status" value="1"/>
</dbReference>
<dbReference type="Pfam" id="PF01040">
    <property type="entry name" value="UbiA"/>
    <property type="match status" value="1"/>
</dbReference>
<dbReference type="PROSITE" id="PS00943">
    <property type="entry name" value="UBIA"/>
    <property type="match status" value="1"/>
</dbReference>
<gene>
    <name evidence="1" type="primary">cyoE</name>
    <name type="ordered locus">ESA_02874</name>
</gene>
<evidence type="ECO:0000255" key="1">
    <source>
        <dbReference type="HAMAP-Rule" id="MF_00154"/>
    </source>
</evidence>
<organism>
    <name type="scientific">Cronobacter sakazakii (strain ATCC BAA-894)</name>
    <name type="common">Enterobacter sakazakii</name>
    <dbReference type="NCBI Taxonomy" id="290339"/>
    <lineage>
        <taxon>Bacteria</taxon>
        <taxon>Pseudomonadati</taxon>
        <taxon>Pseudomonadota</taxon>
        <taxon>Gammaproteobacteria</taxon>
        <taxon>Enterobacterales</taxon>
        <taxon>Enterobacteriaceae</taxon>
        <taxon>Cronobacter</taxon>
    </lineage>
</organism>
<proteinExistence type="inferred from homology"/>
<protein>
    <recommendedName>
        <fullName evidence="1">Protoheme IX farnesyltransferase</fullName>
        <ecNumber evidence="1">2.5.1.141</ecNumber>
    </recommendedName>
    <alternativeName>
        <fullName evidence="1">Heme B farnesyltransferase</fullName>
    </alternativeName>
    <alternativeName>
        <fullName evidence="1">Heme O synthase</fullName>
    </alternativeName>
</protein>
<feature type="chain" id="PRO_0000326890" description="Protoheme IX farnesyltransferase">
    <location>
        <begin position="1"/>
        <end position="295"/>
    </location>
</feature>
<feature type="transmembrane region" description="Helical" evidence="1">
    <location>
        <begin position="8"/>
        <end position="28"/>
    </location>
</feature>
<feature type="transmembrane region" description="Helical" evidence="1">
    <location>
        <begin position="35"/>
        <end position="55"/>
    </location>
</feature>
<feature type="transmembrane region" description="Helical" evidence="1">
    <location>
        <begin position="74"/>
        <end position="94"/>
    </location>
</feature>
<feature type="transmembrane region" description="Helical" evidence="1">
    <location>
        <begin position="106"/>
        <end position="125"/>
    </location>
</feature>
<feature type="transmembrane region" description="Helical" evidence="1">
    <location>
        <begin position="132"/>
        <end position="152"/>
    </location>
</feature>
<feature type="transmembrane region" description="Helical" evidence="1">
    <location>
        <begin position="162"/>
        <end position="182"/>
    </location>
</feature>
<feature type="transmembrane region" description="Helical" evidence="1">
    <location>
        <begin position="208"/>
        <end position="228"/>
    </location>
</feature>
<feature type="transmembrane region" description="Helical" evidence="1">
    <location>
        <begin position="233"/>
        <end position="253"/>
    </location>
</feature>
<feature type="transmembrane region" description="Helical" evidence="1">
    <location>
        <begin position="264"/>
        <end position="284"/>
    </location>
</feature>